<proteinExistence type="inferred from homology"/>
<keyword id="KW-0963">Cytoplasm</keyword>
<keyword id="KW-0441">Lipid A biosynthesis</keyword>
<keyword id="KW-0444">Lipid biosynthesis</keyword>
<keyword id="KW-0443">Lipid metabolism</keyword>
<keyword id="KW-0456">Lyase</keyword>
<feature type="chain" id="PRO_0000242906" description="3-hydroxyacyl-[acyl-carrier-protein] dehydratase FabZ">
    <location>
        <begin position="1"/>
        <end position="166"/>
    </location>
</feature>
<feature type="active site" evidence="1">
    <location>
        <position position="72"/>
    </location>
</feature>
<reference key="1">
    <citation type="journal article" date="2007" name="ISME J.">
        <title>Population level functional diversity in a microbial community revealed by comparative genomic and metagenomic analyses.</title>
        <authorList>
            <person name="Bhaya D."/>
            <person name="Grossman A.R."/>
            <person name="Steunou A.-S."/>
            <person name="Khuri N."/>
            <person name="Cohan F.M."/>
            <person name="Hamamura N."/>
            <person name="Melendrez M.C."/>
            <person name="Bateson M.M."/>
            <person name="Ward D.M."/>
            <person name="Heidelberg J.F."/>
        </authorList>
    </citation>
    <scope>NUCLEOTIDE SEQUENCE [LARGE SCALE GENOMIC DNA]</scope>
    <source>
        <strain>JA-3-3Ab</strain>
    </source>
</reference>
<accession>Q2JTA0</accession>
<organism>
    <name type="scientific">Synechococcus sp. (strain JA-3-3Ab)</name>
    <name type="common">Cyanobacteria bacterium Yellowstone A-Prime</name>
    <dbReference type="NCBI Taxonomy" id="321327"/>
    <lineage>
        <taxon>Bacteria</taxon>
        <taxon>Bacillati</taxon>
        <taxon>Cyanobacteriota</taxon>
        <taxon>Cyanophyceae</taxon>
        <taxon>Synechococcales</taxon>
        <taxon>Synechococcaceae</taxon>
        <taxon>Synechococcus</taxon>
    </lineage>
</organism>
<comment type="function">
    <text evidence="1">Involved in unsaturated fatty acids biosynthesis. Catalyzes the dehydration of short chain beta-hydroxyacyl-ACPs and long chain saturated and unsaturated beta-hydroxyacyl-ACPs.</text>
</comment>
<comment type="catalytic activity">
    <reaction evidence="1">
        <text>a (3R)-hydroxyacyl-[ACP] = a (2E)-enoyl-[ACP] + H2O</text>
        <dbReference type="Rhea" id="RHEA:13097"/>
        <dbReference type="Rhea" id="RHEA-COMP:9925"/>
        <dbReference type="Rhea" id="RHEA-COMP:9945"/>
        <dbReference type="ChEBI" id="CHEBI:15377"/>
        <dbReference type="ChEBI" id="CHEBI:78784"/>
        <dbReference type="ChEBI" id="CHEBI:78827"/>
        <dbReference type="EC" id="4.2.1.59"/>
    </reaction>
</comment>
<comment type="subcellular location">
    <subcellularLocation>
        <location evidence="1">Cytoplasm</location>
    </subcellularLocation>
</comment>
<comment type="similarity">
    <text evidence="1">Belongs to the thioester dehydratase family. FabZ subfamily.</text>
</comment>
<gene>
    <name evidence="1" type="primary">fabZ</name>
    <name type="ordered locus">CYA_1957</name>
</gene>
<protein>
    <recommendedName>
        <fullName evidence="1">3-hydroxyacyl-[acyl-carrier-protein] dehydratase FabZ</fullName>
        <ecNumber evidence="1">4.2.1.59</ecNumber>
    </recommendedName>
    <alternativeName>
        <fullName evidence="1">(3R)-hydroxymyristoyl-[acyl-carrier-protein] dehydratase</fullName>
        <shortName evidence="1">(3R)-hydroxymyristoyl-ACP dehydrase</shortName>
    </alternativeName>
    <alternativeName>
        <fullName evidence="1">Beta-hydroxyacyl-ACP dehydratase</fullName>
    </alternativeName>
</protein>
<evidence type="ECO:0000255" key="1">
    <source>
        <dbReference type="HAMAP-Rule" id="MF_00406"/>
    </source>
</evidence>
<dbReference type="EC" id="4.2.1.59" evidence="1"/>
<dbReference type="EMBL" id="CP000239">
    <property type="protein sequence ID" value="ABD00102.1"/>
    <property type="molecule type" value="Genomic_DNA"/>
</dbReference>
<dbReference type="RefSeq" id="WP_011430776.1">
    <property type="nucleotide sequence ID" value="NC_007775.1"/>
</dbReference>
<dbReference type="SMR" id="Q2JTA0"/>
<dbReference type="STRING" id="321327.CYA_1957"/>
<dbReference type="KEGG" id="cya:CYA_1957"/>
<dbReference type="eggNOG" id="COG0764">
    <property type="taxonomic scope" value="Bacteria"/>
</dbReference>
<dbReference type="HOGENOM" id="CLU_078912_3_0_3"/>
<dbReference type="OrthoDB" id="9772788at2"/>
<dbReference type="Proteomes" id="UP000008818">
    <property type="component" value="Chromosome"/>
</dbReference>
<dbReference type="GO" id="GO:0005737">
    <property type="term" value="C:cytoplasm"/>
    <property type="evidence" value="ECO:0007669"/>
    <property type="project" value="UniProtKB-SubCell"/>
</dbReference>
<dbReference type="GO" id="GO:0016020">
    <property type="term" value="C:membrane"/>
    <property type="evidence" value="ECO:0007669"/>
    <property type="project" value="GOC"/>
</dbReference>
<dbReference type="GO" id="GO:0019171">
    <property type="term" value="F:(3R)-hydroxyacyl-[acyl-carrier-protein] dehydratase activity"/>
    <property type="evidence" value="ECO:0007669"/>
    <property type="project" value="UniProtKB-EC"/>
</dbReference>
<dbReference type="GO" id="GO:0006633">
    <property type="term" value="P:fatty acid biosynthetic process"/>
    <property type="evidence" value="ECO:0007669"/>
    <property type="project" value="UniProtKB-UniRule"/>
</dbReference>
<dbReference type="GO" id="GO:0009245">
    <property type="term" value="P:lipid A biosynthetic process"/>
    <property type="evidence" value="ECO:0007669"/>
    <property type="project" value="UniProtKB-UniRule"/>
</dbReference>
<dbReference type="CDD" id="cd01288">
    <property type="entry name" value="FabZ"/>
    <property type="match status" value="1"/>
</dbReference>
<dbReference type="FunFam" id="3.10.129.10:FF:000001">
    <property type="entry name" value="3-hydroxyacyl-[acyl-carrier-protein] dehydratase FabZ"/>
    <property type="match status" value="1"/>
</dbReference>
<dbReference type="Gene3D" id="3.10.129.10">
    <property type="entry name" value="Hotdog Thioesterase"/>
    <property type="match status" value="1"/>
</dbReference>
<dbReference type="HAMAP" id="MF_00406">
    <property type="entry name" value="FabZ"/>
    <property type="match status" value="1"/>
</dbReference>
<dbReference type="InterPro" id="IPR013114">
    <property type="entry name" value="FabA_FabZ"/>
</dbReference>
<dbReference type="InterPro" id="IPR010084">
    <property type="entry name" value="FabZ"/>
</dbReference>
<dbReference type="InterPro" id="IPR029069">
    <property type="entry name" value="HotDog_dom_sf"/>
</dbReference>
<dbReference type="NCBIfam" id="TIGR01750">
    <property type="entry name" value="fabZ"/>
    <property type="match status" value="1"/>
</dbReference>
<dbReference type="NCBIfam" id="NF000582">
    <property type="entry name" value="PRK00006.1"/>
    <property type="match status" value="1"/>
</dbReference>
<dbReference type="PANTHER" id="PTHR30272">
    <property type="entry name" value="3-HYDROXYACYL-[ACYL-CARRIER-PROTEIN] DEHYDRATASE"/>
    <property type="match status" value="1"/>
</dbReference>
<dbReference type="PANTHER" id="PTHR30272:SF1">
    <property type="entry name" value="3-HYDROXYACYL-[ACYL-CARRIER-PROTEIN] DEHYDRATASE"/>
    <property type="match status" value="1"/>
</dbReference>
<dbReference type="Pfam" id="PF07977">
    <property type="entry name" value="FabA"/>
    <property type="match status" value="1"/>
</dbReference>
<dbReference type="SUPFAM" id="SSF54637">
    <property type="entry name" value="Thioesterase/thiol ester dehydrase-isomerase"/>
    <property type="match status" value="1"/>
</dbReference>
<name>FABZ_SYNJA</name>
<sequence>MSSDVSPPPLLSAEAAAQLATAPPVFTTDQILEILPHRYPFLLVDRVVEYQPGQRAVGLKNVTFNEPFFQGHFPNRPIMPGVLIVEAMAQLGGIVLTKLPDVAGRLALFAGIDGVRFRRPVLPGDQLLLSANLLTIRQKRIGKMFCRAQVGGQLVTEGELMFSLVD</sequence>